<accession>Q46506</accession>
<dbReference type="EC" id="1.12.1.3" evidence="2"/>
<dbReference type="EMBL" id="U07229">
    <property type="protein sequence ID" value="AAA87055.1"/>
    <property type="molecule type" value="Genomic_DNA"/>
</dbReference>
<dbReference type="PIR" id="B57150">
    <property type="entry name" value="B57150"/>
</dbReference>
<dbReference type="SMR" id="Q46506"/>
<dbReference type="KEGG" id="ag:AAA87055"/>
<dbReference type="GO" id="GO:0050583">
    <property type="term" value="F:hydrogen dehydrogenase (NADP+) activity"/>
    <property type="evidence" value="ECO:0000314"/>
    <property type="project" value="UniProtKB"/>
</dbReference>
<dbReference type="CDD" id="cd02980">
    <property type="entry name" value="TRX_Fd_family"/>
    <property type="match status" value="1"/>
</dbReference>
<dbReference type="Gene3D" id="3.40.30.10">
    <property type="entry name" value="Glutaredoxin"/>
    <property type="match status" value="1"/>
</dbReference>
<dbReference type="InterPro" id="IPR036249">
    <property type="entry name" value="Thioredoxin-like_sf"/>
</dbReference>
<dbReference type="SUPFAM" id="SSF52833">
    <property type="entry name" value="Thioredoxin-like"/>
    <property type="match status" value="1"/>
</dbReference>
<reference key="1">
    <citation type="journal article" date="1995" name="J. Bacteriol.">
        <title>Characterization of an operon encoding an NADP-reducing hydrogenase in Desulfovibrio fructosovorans.</title>
        <authorList>
            <person name="Malki S."/>
            <person name="Saimmaime I."/>
            <person name="De Luca G."/>
            <person name="Rousset M."/>
            <person name="Dermoun Z."/>
            <person name="Belaich J.P."/>
        </authorList>
    </citation>
    <scope>NUCLEOTIDE SEQUENCE [GENOMIC DNA]</scope>
    <scope>FUNCTION AS A NADP-REDUCING HYDROGENASE</scope>
</reference>
<reference key="2">
    <citation type="journal article" date="1998" name="Biochem. Biophys. Res. Commun.">
        <title>The NADP-reducing hydrogenase of Desulfovibrio fructosovorans: evidence for a native complex with hydrogen-dependent methyl-viologen-reducing activity.</title>
        <authorList>
            <person name="de Luca G."/>
            <person name="de Philip P."/>
            <person name="Rousset M."/>
            <person name="Belaich J.P."/>
            <person name="Dermoun Z."/>
        </authorList>
    </citation>
    <scope>FUNCTION AS A NADP-REDUCING HYDROGENASE</scope>
    <scope>CATALYTIC ACTIVITY</scope>
    <scope>BIOPHYSICOCHEMICAL PROPERTIES</scope>
    <scope>ACTIVITY REGULATION</scope>
    <scope>SUBUNIT</scope>
</reference>
<gene>
    <name type="primary">hndB</name>
</gene>
<keyword id="KW-0521">NADP</keyword>
<keyword id="KW-0560">Oxidoreductase</keyword>
<comment type="function">
    <text evidence="1 2">Catalyzes the reduction of NADP in the presence of molecular H2 to yield NADPH.</text>
</comment>
<comment type="catalytic activity">
    <reaction evidence="2">
        <text>H2 + NADP(+) = NADPH + H(+)</text>
        <dbReference type="Rhea" id="RHEA:18637"/>
        <dbReference type="ChEBI" id="CHEBI:15378"/>
        <dbReference type="ChEBI" id="CHEBI:18276"/>
        <dbReference type="ChEBI" id="CHEBI:57783"/>
        <dbReference type="ChEBI" id="CHEBI:58349"/>
        <dbReference type="EC" id="1.12.1.3"/>
    </reaction>
</comment>
<comment type="activity regulation">
    <text evidence="2">Inhibited by oxygen.</text>
</comment>
<comment type="biophysicochemical properties">
    <kinetics>
        <KM evidence="2">0.09 mM for NADP (at 30 degrees Celsius and at pH 8)</KM>
        <Vmax evidence="2">0.013 umol/min/mg enzyme (at 30 degrees Celsius and at pH 8)</Vmax>
    </kinetics>
    <phDependence>
        <text evidence="2">Optimum pH is 8.</text>
    </phDependence>
</comment>
<comment type="subunit">
    <text evidence="2">Heterotetramer composed of HndA, HndB, HndC and HndD subunits. HndA and HndB could form a heterodimeric intermediate in the electron transfer between the active site of hydrogenase subunit HndD and the NADP reduction site of the reducing subunit HndC.</text>
</comment>
<evidence type="ECO:0000269" key="1">
    <source>
    </source>
</evidence>
<evidence type="ECO:0000269" key="2">
    <source>
    </source>
</evidence>
<name>HNDB_SOLFR</name>
<protein>
    <recommendedName>
        <fullName>NADP-reducing hydrogenase subunit HndB</fullName>
        <ecNumber evidence="2">1.12.1.3</ecNumber>
    </recommendedName>
    <alternativeName>
        <fullName>Hydrogen dehydrogenase (NADP(+))</fullName>
    </alternativeName>
</protein>
<organism>
    <name type="scientific">Solidesulfovibrio fructosivorans</name>
    <name type="common">Desulfovibrio fructosivorans</name>
    <dbReference type="NCBI Taxonomy" id="878"/>
    <lineage>
        <taxon>Bacteria</taxon>
        <taxon>Pseudomonadati</taxon>
        <taxon>Thermodesulfobacteriota</taxon>
        <taxon>Desulfovibrionia</taxon>
        <taxon>Desulfovibrionales</taxon>
        <taxon>Desulfovibrionaceae</taxon>
        <taxon>Solidesulfovibrio</taxon>
    </lineage>
</organism>
<sequence>MSTIRSFEDLKAKRQEILDRKAARNGKTIINVSLATCSIAAGGKVAMEAMQDEVAKNGLTGVEFMQSSCMTYCYAEPTVEITLPGKDPVVFGGVDENRARELVTEYVMKGEPVEGIIPVNYERVVL</sequence>
<proteinExistence type="evidence at protein level"/>
<feature type="chain" id="PRO_0000418719" description="NADP-reducing hydrogenase subunit HndB">
    <location>
        <begin position="1"/>
        <end position="126"/>
    </location>
</feature>